<protein>
    <recommendedName>
        <fullName evidence="1">Chaperone SurA</fullName>
    </recommendedName>
    <alternativeName>
        <fullName evidence="1">Peptidyl-prolyl cis-trans isomerase SurA</fullName>
        <shortName evidence="1">PPIase SurA</shortName>
        <ecNumber evidence="1">5.2.1.8</ecNumber>
    </alternativeName>
    <alternativeName>
        <fullName evidence="1">Rotamase SurA</fullName>
    </alternativeName>
</protein>
<reference key="1">
    <citation type="journal article" date="2003" name="Proc. Natl. Acad. Sci. U.S.A.">
        <title>The complete genome sequence of Chromobacterium violaceum reveals remarkable and exploitable bacterial adaptability.</title>
        <authorList>
            <person name="Vasconcelos A.T.R."/>
            <person name="de Almeida D.F."/>
            <person name="Hungria M."/>
            <person name="Guimaraes C.T."/>
            <person name="Antonio R.V."/>
            <person name="Almeida F.C."/>
            <person name="de Almeida L.G.P."/>
            <person name="de Almeida R."/>
            <person name="Alves-Gomes J.A."/>
            <person name="Andrade E.M."/>
            <person name="Araripe J."/>
            <person name="de Araujo M.F.F."/>
            <person name="Astolfi-Filho S."/>
            <person name="Azevedo V."/>
            <person name="Baptista A.J."/>
            <person name="Bataus L.A.M."/>
            <person name="Batista J.S."/>
            <person name="Belo A."/>
            <person name="van den Berg C."/>
            <person name="Bogo M."/>
            <person name="Bonatto S."/>
            <person name="Bordignon J."/>
            <person name="Brigido M.M."/>
            <person name="Brito C.A."/>
            <person name="Brocchi M."/>
            <person name="Burity H.A."/>
            <person name="Camargo A.A."/>
            <person name="Cardoso D.D.P."/>
            <person name="Carneiro N.P."/>
            <person name="Carraro D.M."/>
            <person name="Carvalho C.M.B."/>
            <person name="Cascardo J.C.M."/>
            <person name="Cavada B.S."/>
            <person name="Chueire L.M.O."/>
            <person name="Creczynski-Pasa T.B."/>
            <person name="Cunha-Junior N.C."/>
            <person name="Fagundes N."/>
            <person name="Falcao C.L."/>
            <person name="Fantinatti F."/>
            <person name="Farias I.P."/>
            <person name="Felipe M.S.S."/>
            <person name="Ferrari L.P."/>
            <person name="Ferro J.A."/>
            <person name="Ferro M.I.T."/>
            <person name="Franco G.R."/>
            <person name="Freitas N.S.A."/>
            <person name="Furlan L.R."/>
            <person name="Gazzinelli R.T."/>
            <person name="Gomes E.A."/>
            <person name="Goncalves P.R."/>
            <person name="Grangeiro T.B."/>
            <person name="Grattapaglia D."/>
            <person name="Grisard E.C."/>
            <person name="Hanna E.S."/>
            <person name="Jardim S.N."/>
            <person name="Laurino J."/>
            <person name="Leoi L.C.T."/>
            <person name="Lima L.F.A."/>
            <person name="Loureiro M.F."/>
            <person name="Lyra M.C.C.P."/>
            <person name="Madeira H.M.F."/>
            <person name="Manfio G.P."/>
            <person name="Maranhao A.Q."/>
            <person name="Martins W.S."/>
            <person name="di Mauro S.M.Z."/>
            <person name="de Medeiros S.R.B."/>
            <person name="Meissner R.V."/>
            <person name="Moreira M.A.M."/>
            <person name="Nascimento F.F."/>
            <person name="Nicolas M.F."/>
            <person name="Oliveira J.G."/>
            <person name="Oliveira S.C."/>
            <person name="Paixao R.F.C."/>
            <person name="Parente J.A."/>
            <person name="Pedrosa F.O."/>
            <person name="Pena S.D.J."/>
            <person name="Pereira J.O."/>
            <person name="Pereira M."/>
            <person name="Pinto L.S.R.C."/>
            <person name="Pinto L.S."/>
            <person name="Porto J.I.R."/>
            <person name="Potrich D.P."/>
            <person name="Ramalho-Neto C.E."/>
            <person name="Reis A.M.M."/>
            <person name="Rigo L.U."/>
            <person name="Rondinelli E."/>
            <person name="Santos E.B.P."/>
            <person name="Santos F.R."/>
            <person name="Schneider M.P.C."/>
            <person name="Seuanez H.N."/>
            <person name="Silva A.M.R."/>
            <person name="da Silva A.L.C."/>
            <person name="Silva D.W."/>
            <person name="Silva R."/>
            <person name="Simoes I.C."/>
            <person name="Simon D."/>
            <person name="Soares C.M.A."/>
            <person name="Soares R.B.A."/>
            <person name="Souza E.M."/>
            <person name="Souza K.R.L."/>
            <person name="Souza R.C."/>
            <person name="Steffens M.B.R."/>
            <person name="Steindel M."/>
            <person name="Teixeira S.R."/>
            <person name="Urmenyi T."/>
            <person name="Vettore A."/>
            <person name="Wassem R."/>
            <person name="Zaha A."/>
            <person name="Simpson A.J.G."/>
        </authorList>
    </citation>
    <scope>NUCLEOTIDE SEQUENCE [LARGE SCALE GENOMIC DNA]</scope>
    <source>
        <strain>ATCC 12472 / DSM 30191 / JCM 1249 / CCUG 213 / NBRC 12614 / NCIMB 9131 / NCTC 9757 / MK</strain>
    </source>
</reference>
<feature type="signal peptide" evidence="1">
    <location>
        <begin position="1"/>
        <end position="19"/>
    </location>
</feature>
<feature type="chain" id="PRO_0000270011" description="Chaperone SurA">
    <location>
        <begin position="20"/>
        <end position="429"/>
    </location>
</feature>
<feature type="domain" description="PpiC 1" evidence="1">
    <location>
        <begin position="172"/>
        <end position="273"/>
    </location>
</feature>
<feature type="domain" description="PpiC 2" evidence="1">
    <location>
        <begin position="283"/>
        <end position="381"/>
    </location>
</feature>
<name>SURA_CHRVO</name>
<evidence type="ECO:0000255" key="1">
    <source>
        <dbReference type="HAMAP-Rule" id="MF_01183"/>
    </source>
</evidence>
<organism>
    <name type="scientific">Chromobacterium violaceum (strain ATCC 12472 / DSM 30191 / JCM 1249 / CCUG 213 / NBRC 12614 / NCIMB 9131 / NCTC 9757 / MK)</name>
    <dbReference type="NCBI Taxonomy" id="243365"/>
    <lineage>
        <taxon>Bacteria</taxon>
        <taxon>Pseudomonadati</taxon>
        <taxon>Pseudomonadota</taxon>
        <taxon>Betaproteobacteria</taxon>
        <taxon>Neisseriales</taxon>
        <taxon>Chromobacteriaceae</taxon>
        <taxon>Chromobacterium</taxon>
    </lineage>
</organism>
<gene>
    <name evidence="1" type="primary">surA</name>
    <name type="ordered locus">CV_4230</name>
</gene>
<accession>Q7NQB0</accession>
<dbReference type="EC" id="5.2.1.8" evidence="1"/>
<dbReference type="EMBL" id="AE016825">
    <property type="protein sequence ID" value="AAQ61890.1"/>
    <property type="molecule type" value="Genomic_DNA"/>
</dbReference>
<dbReference type="RefSeq" id="WP_011137776.1">
    <property type="nucleotide sequence ID" value="NC_005085.1"/>
</dbReference>
<dbReference type="SMR" id="Q7NQB0"/>
<dbReference type="STRING" id="243365.CV_4230"/>
<dbReference type="GeneID" id="66366292"/>
<dbReference type="KEGG" id="cvi:CV_4230"/>
<dbReference type="eggNOG" id="COG0760">
    <property type="taxonomic scope" value="Bacteria"/>
</dbReference>
<dbReference type="HOGENOM" id="CLU_034646_11_0_4"/>
<dbReference type="Proteomes" id="UP000001424">
    <property type="component" value="Chromosome"/>
</dbReference>
<dbReference type="GO" id="GO:0030288">
    <property type="term" value="C:outer membrane-bounded periplasmic space"/>
    <property type="evidence" value="ECO:0007669"/>
    <property type="project" value="InterPro"/>
</dbReference>
<dbReference type="GO" id="GO:0042277">
    <property type="term" value="F:peptide binding"/>
    <property type="evidence" value="ECO:0007669"/>
    <property type="project" value="InterPro"/>
</dbReference>
<dbReference type="GO" id="GO:0003755">
    <property type="term" value="F:peptidyl-prolyl cis-trans isomerase activity"/>
    <property type="evidence" value="ECO:0007669"/>
    <property type="project" value="UniProtKB-UniRule"/>
</dbReference>
<dbReference type="GO" id="GO:0051082">
    <property type="term" value="F:unfolded protein binding"/>
    <property type="evidence" value="ECO:0007669"/>
    <property type="project" value="UniProtKB-UniRule"/>
</dbReference>
<dbReference type="GO" id="GO:0043165">
    <property type="term" value="P:Gram-negative-bacterium-type cell outer membrane assembly"/>
    <property type="evidence" value="ECO:0007669"/>
    <property type="project" value="InterPro"/>
</dbReference>
<dbReference type="GO" id="GO:0006457">
    <property type="term" value="P:protein folding"/>
    <property type="evidence" value="ECO:0007669"/>
    <property type="project" value="UniProtKB-UniRule"/>
</dbReference>
<dbReference type="GO" id="GO:0050821">
    <property type="term" value="P:protein stabilization"/>
    <property type="evidence" value="ECO:0007669"/>
    <property type="project" value="InterPro"/>
</dbReference>
<dbReference type="Gene3D" id="3.10.50.40">
    <property type="match status" value="2"/>
</dbReference>
<dbReference type="Gene3D" id="1.10.4030.10">
    <property type="entry name" value="Porin chaperone SurA, peptide-binding domain"/>
    <property type="match status" value="1"/>
</dbReference>
<dbReference type="HAMAP" id="MF_01183">
    <property type="entry name" value="Chaperone_SurA"/>
    <property type="match status" value="1"/>
</dbReference>
<dbReference type="InterPro" id="IPR050280">
    <property type="entry name" value="OMP_Chaperone_SurA"/>
</dbReference>
<dbReference type="InterPro" id="IPR046357">
    <property type="entry name" value="PPIase_dom_sf"/>
</dbReference>
<dbReference type="InterPro" id="IPR000297">
    <property type="entry name" value="PPIase_PpiC"/>
</dbReference>
<dbReference type="InterPro" id="IPR023034">
    <property type="entry name" value="PPIase_SurA"/>
</dbReference>
<dbReference type="InterPro" id="IPR015391">
    <property type="entry name" value="SurA_N"/>
</dbReference>
<dbReference type="InterPro" id="IPR027304">
    <property type="entry name" value="Trigger_fact/SurA_dom_sf"/>
</dbReference>
<dbReference type="PANTHER" id="PTHR47637">
    <property type="entry name" value="CHAPERONE SURA"/>
    <property type="match status" value="1"/>
</dbReference>
<dbReference type="PANTHER" id="PTHR47637:SF1">
    <property type="entry name" value="CHAPERONE SURA"/>
    <property type="match status" value="1"/>
</dbReference>
<dbReference type="Pfam" id="PF00639">
    <property type="entry name" value="Rotamase"/>
    <property type="match status" value="1"/>
</dbReference>
<dbReference type="Pfam" id="PF13616">
    <property type="entry name" value="Rotamase_3"/>
    <property type="match status" value="1"/>
</dbReference>
<dbReference type="Pfam" id="PF09312">
    <property type="entry name" value="SurA_N"/>
    <property type="match status" value="1"/>
</dbReference>
<dbReference type="SUPFAM" id="SSF54534">
    <property type="entry name" value="FKBP-like"/>
    <property type="match status" value="2"/>
</dbReference>
<dbReference type="SUPFAM" id="SSF109998">
    <property type="entry name" value="Triger factor/SurA peptide-binding domain-like"/>
    <property type="match status" value="1"/>
</dbReference>
<dbReference type="PROSITE" id="PS50198">
    <property type="entry name" value="PPIC_PPIASE_2"/>
    <property type="match status" value="2"/>
</dbReference>
<proteinExistence type="inferred from homology"/>
<sequence>MKKTLLALLIASVMQSALAAPATPVREVDRIVAVVNKNVITWQELQARVNEAIKQLEAQKVAPPPREVLERQVLEQMITEEVQLQYAASGGLRIEDAAVDQAVANLAKQNKLSEAGLKAQLAKDGITLDRLRADIRRELTISRLRDSEVASRVNVSDSEVDQAMKSAQSANRTEYHLASILVAVPERADAKQIDQLSQKVHKAQADLAAGQPFAKVSAAYSDAPNALKGGDMGWRSATSLPQEFVQLLEQMKVGADTDVIRTQQGFFIFKLVDKRSGGAPMMVEQYHPRHILIRTNEAVSEADAKARIDQVRDRIMRGAKFADMAKLYSEDGSNAKGGDLGWVNMGDLVPEFEKAMVSLPIGQVSQPVRTPFGWHLILVEGKRNQDVSSDHEKMAVKQQIRARKMEQAYTDWVRQLRDSAFVEEHLDEK</sequence>
<keyword id="KW-0143">Chaperone</keyword>
<keyword id="KW-0413">Isomerase</keyword>
<keyword id="KW-0574">Periplasm</keyword>
<keyword id="KW-1185">Reference proteome</keyword>
<keyword id="KW-0677">Repeat</keyword>
<keyword id="KW-0697">Rotamase</keyword>
<keyword id="KW-0732">Signal</keyword>
<comment type="function">
    <text evidence="1">Chaperone involved in the correct folding and assembly of outer membrane proteins. Recognizes specific patterns of aromatic residues and the orientation of their side chains, which are found more frequently in integral outer membrane proteins. May act in both early periplasmic and late outer membrane-associated steps of protein maturation.</text>
</comment>
<comment type="catalytic activity">
    <reaction evidence="1">
        <text>[protein]-peptidylproline (omega=180) = [protein]-peptidylproline (omega=0)</text>
        <dbReference type="Rhea" id="RHEA:16237"/>
        <dbReference type="Rhea" id="RHEA-COMP:10747"/>
        <dbReference type="Rhea" id="RHEA-COMP:10748"/>
        <dbReference type="ChEBI" id="CHEBI:83833"/>
        <dbReference type="ChEBI" id="CHEBI:83834"/>
        <dbReference type="EC" id="5.2.1.8"/>
    </reaction>
</comment>
<comment type="subcellular location">
    <subcellularLocation>
        <location evidence="1">Periplasm</location>
    </subcellularLocation>
    <text evidence="1">Is capable of associating with the outer membrane.</text>
</comment>
<comment type="domain">
    <text evidence="1">The PPIase activity resides only in the second parvulin domain. The N-terminal region and the C-terminal tail are necessary and sufficient for the chaperone activity of SurA. The PPIase activity is dispensable for SurA to function as a chaperone. The N-terminal region and the C-terminal tail are also required for porin recognition.</text>
</comment>